<feature type="signal peptide" evidence="2">
    <location>
        <begin position="1"/>
        <end position="21"/>
    </location>
</feature>
<feature type="chain" id="PRO_0000291893" description="Laccase-8">
    <location>
        <begin position="22"/>
        <end position="554"/>
    </location>
</feature>
<feature type="domain" description="Plastocyanin-like 1">
    <location>
        <begin position="29"/>
        <end position="145"/>
    </location>
</feature>
<feature type="domain" description="Plastocyanin-like 2">
    <location>
        <begin position="156"/>
        <end position="309"/>
    </location>
</feature>
<feature type="domain" description="Plastocyanin-like 3">
    <location>
        <begin position="411"/>
        <end position="537"/>
    </location>
</feature>
<feature type="binding site" evidence="1">
    <location>
        <position position="79"/>
    </location>
    <ligand>
        <name>Cu cation</name>
        <dbReference type="ChEBI" id="CHEBI:23378"/>
        <label>1</label>
    </ligand>
</feature>
<feature type="binding site" evidence="1">
    <location>
        <position position="81"/>
    </location>
    <ligand>
        <name>Cu cation</name>
        <dbReference type="ChEBI" id="CHEBI:23378"/>
        <label>2</label>
    </ligand>
</feature>
<feature type="binding site" evidence="1">
    <location>
        <position position="124"/>
    </location>
    <ligand>
        <name>Cu cation</name>
        <dbReference type="ChEBI" id="CHEBI:23378"/>
        <label>2</label>
    </ligand>
</feature>
<feature type="binding site" evidence="1">
    <location>
        <position position="126"/>
    </location>
    <ligand>
        <name>Cu cation</name>
        <dbReference type="ChEBI" id="CHEBI:23378"/>
        <label>3</label>
    </ligand>
</feature>
<feature type="binding site" evidence="1">
    <location>
        <position position="455"/>
    </location>
    <ligand>
        <name>Cu cation</name>
        <dbReference type="ChEBI" id="CHEBI:23378"/>
        <label>4</label>
    </ligand>
</feature>
<feature type="binding site" evidence="1">
    <location>
        <position position="458"/>
    </location>
    <ligand>
        <name>Cu cation</name>
        <dbReference type="ChEBI" id="CHEBI:23378"/>
        <label>1</label>
    </ligand>
</feature>
<feature type="binding site" evidence="1">
    <location>
        <position position="460"/>
    </location>
    <ligand>
        <name>Cu cation</name>
        <dbReference type="ChEBI" id="CHEBI:23378"/>
        <label>3</label>
    </ligand>
</feature>
<feature type="binding site" evidence="1">
    <location>
        <position position="516"/>
    </location>
    <ligand>
        <name>Cu cation</name>
        <dbReference type="ChEBI" id="CHEBI:23378"/>
        <label>3</label>
    </ligand>
</feature>
<feature type="binding site" evidence="1">
    <location>
        <position position="517"/>
    </location>
    <ligand>
        <name>Cu cation</name>
        <dbReference type="ChEBI" id="CHEBI:23378"/>
        <label>4</label>
    </ligand>
</feature>
<feature type="binding site" evidence="1">
    <location>
        <position position="518"/>
    </location>
    <ligand>
        <name>Cu cation</name>
        <dbReference type="ChEBI" id="CHEBI:23378"/>
        <label>2</label>
    </ligand>
</feature>
<feature type="binding site" evidence="1">
    <location>
        <position position="522"/>
    </location>
    <ligand>
        <name>Cu cation</name>
        <dbReference type="ChEBI" id="CHEBI:23378"/>
        <label>4</label>
    </ligand>
</feature>
<feature type="glycosylation site" description="N-linked (GlcNAc...) asparagine" evidence="2">
    <location>
        <position position="107"/>
    </location>
</feature>
<feature type="glycosylation site" description="N-linked (GlcNAc...) asparagine" evidence="2">
    <location>
        <position position="113"/>
    </location>
</feature>
<feature type="glycosylation site" description="N-linked (GlcNAc...) asparagine" evidence="2">
    <location>
        <position position="271"/>
    </location>
</feature>
<feature type="glycosylation site" description="N-linked (GlcNAc...) asparagine" evidence="2">
    <location>
        <position position="369"/>
    </location>
</feature>
<sequence length="554" mass="60278">MASAAMLVPLVLVLCTAAASAAVVEHTFKVGGTKITQLCMNSVIYTANQQLPGPTIEVTEGDTLVVHAVNDSPYPLSLHWHGVYQLRSGWNDGANKITQCPIQPSGNFTYRFNITGQEGTLWWHAHSSLLRATIYGALIIKPRNGPSGYPFPEPYEEIPILLGEWWNRNVDDVENDGYLTGLGPQISDALTINGMPGDQNRCKGSAMYEVEVEYGKTCLLRIINAAVNVELFFKVAGHTFTVVAADASYTKPYATDVIVIAPGQTVDALMNTTASPGRYYMAAHVFDSKTVAVPFDQSTATGIVKYKGVPNYAPAAMPSLPPHDDVVTAGRFYWSLTGLARPSDPGVPTTVDHNMVVTFGLDQAPCAPNQTKCSGFALVAAMNRNSFQFPDQKVSLLEALYKGVPGVYSEDFPDFPPPMQGFRKATAVKKVKYNDVVEVVLQSEQYSSTLGTENHPIHLHGFDFYLLAQGLGRFNPSMKSKYNLVDPQVRNTVAVPAGGWAVIRFMANNPGMWFMHCHLDAHLPLGLAMVFEVLNGPAPNLLPPPPVDHPKCHG</sequence>
<keyword id="KW-0052">Apoplast</keyword>
<keyword id="KW-0186">Copper</keyword>
<keyword id="KW-0325">Glycoprotein</keyword>
<keyword id="KW-0439">Lignin degradation</keyword>
<keyword id="KW-0479">Metal-binding</keyword>
<keyword id="KW-0560">Oxidoreductase</keyword>
<keyword id="KW-1185">Reference proteome</keyword>
<keyword id="KW-0677">Repeat</keyword>
<keyword id="KW-0964">Secreted</keyword>
<keyword id="KW-0732">Signal</keyword>
<proteinExistence type="inferred from homology"/>
<evidence type="ECO:0000250" key="1"/>
<evidence type="ECO:0000255" key="2"/>
<evidence type="ECO:0000305" key="3"/>
<name>LAC8_ORYSJ</name>
<protein>
    <recommendedName>
        <fullName>Laccase-8</fullName>
        <ecNumber>1.10.3.2</ecNumber>
    </recommendedName>
    <alternativeName>
        <fullName>Benzenediol:oxygen oxidoreductase 8</fullName>
    </alternativeName>
    <alternativeName>
        <fullName>Diphenol oxidase 8</fullName>
    </alternativeName>
    <alternativeName>
        <fullName>Urishiol oxidase 8</fullName>
    </alternativeName>
</protein>
<reference key="1">
    <citation type="journal article" date="2002" name="Nature">
        <title>The genome sequence and structure of rice chromosome 1.</title>
        <authorList>
            <person name="Sasaki T."/>
            <person name="Matsumoto T."/>
            <person name="Yamamoto K."/>
            <person name="Sakata K."/>
            <person name="Baba T."/>
            <person name="Katayose Y."/>
            <person name="Wu J."/>
            <person name="Niimura Y."/>
            <person name="Cheng Z."/>
            <person name="Nagamura Y."/>
            <person name="Antonio B.A."/>
            <person name="Kanamori H."/>
            <person name="Hosokawa S."/>
            <person name="Masukawa M."/>
            <person name="Arikawa K."/>
            <person name="Chiden Y."/>
            <person name="Hayashi M."/>
            <person name="Okamoto M."/>
            <person name="Ando T."/>
            <person name="Aoki H."/>
            <person name="Arita K."/>
            <person name="Hamada M."/>
            <person name="Harada C."/>
            <person name="Hijishita S."/>
            <person name="Honda M."/>
            <person name="Ichikawa Y."/>
            <person name="Idonuma A."/>
            <person name="Iijima M."/>
            <person name="Ikeda M."/>
            <person name="Ikeno M."/>
            <person name="Ito S."/>
            <person name="Ito T."/>
            <person name="Ito Y."/>
            <person name="Ito Y."/>
            <person name="Iwabuchi A."/>
            <person name="Kamiya K."/>
            <person name="Karasawa W."/>
            <person name="Katagiri S."/>
            <person name="Kikuta A."/>
            <person name="Kobayashi N."/>
            <person name="Kono I."/>
            <person name="Machita K."/>
            <person name="Maehara T."/>
            <person name="Mizuno H."/>
            <person name="Mizubayashi T."/>
            <person name="Mukai Y."/>
            <person name="Nagasaki H."/>
            <person name="Nakashima M."/>
            <person name="Nakama Y."/>
            <person name="Nakamichi Y."/>
            <person name="Nakamura M."/>
            <person name="Namiki N."/>
            <person name="Negishi M."/>
            <person name="Ohta I."/>
            <person name="Ono N."/>
            <person name="Saji S."/>
            <person name="Sakai K."/>
            <person name="Shibata M."/>
            <person name="Shimokawa T."/>
            <person name="Shomura A."/>
            <person name="Song J."/>
            <person name="Takazaki Y."/>
            <person name="Terasawa K."/>
            <person name="Tsuji K."/>
            <person name="Waki K."/>
            <person name="Yamagata H."/>
            <person name="Yamane H."/>
            <person name="Yoshiki S."/>
            <person name="Yoshihara R."/>
            <person name="Yukawa K."/>
            <person name="Zhong H."/>
            <person name="Iwama H."/>
            <person name="Endo T."/>
            <person name="Ito H."/>
            <person name="Hahn J.H."/>
            <person name="Kim H.-I."/>
            <person name="Eun M.-Y."/>
            <person name="Yano M."/>
            <person name="Jiang J."/>
            <person name="Gojobori T."/>
        </authorList>
    </citation>
    <scope>NUCLEOTIDE SEQUENCE [LARGE SCALE GENOMIC DNA]</scope>
    <source>
        <strain>cv. Nipponbare</strain>
    </source>
</reference>
<reference key="2">
    <citation type="journal article" date="2005" name="Nature">
        <title>The map-based sequence of the rice genome.</title>
        <authorList>
            <consortium name="International rice genome sequencing project (IRGSP)"/>
        </authorList>
    </citation>
    <scope>NUCLEOTIDE SEQUENCE [LARGE SCALE GENOMIC DNA]</scope>
    <source>
        <strain>cv. Nipponbare</strain>
    </source>
</reference>
<reference key="3">
    <citation type="journal article" date="2008" name="Nucleic Acids Res.">
        <title>The rice annotation project database (RAP-DB): 2008 update.</title>
        <authorList>
            <consortium name="The rice annotation project (RAP)"/>
        </authorList>
    </citation>
    <scope>GENOME REANNOTATION</scope>
    <source>
        <strain>cv. Nipponbare</strain>
    </source>
</reference>
<reference key="4">
    <citation type="journal article" date="2013" name="Rice">
        <title>Improvement of the Oryza sativa Nipponbare reference genome using next generation sequence and optical map data.</title>
        <authorList>
            <person name="Kawahara Y."/>
            <person name="de la Bastide M."/>
            <person name="Hamilton J.P."/>
            <person name="Kanamori H."/>
            <person name="McCombie W.R."/>
            <person name="Ouyang S."/>
            <person name="Schwartz D.C."/>
            <person name="Tanaka T."/>
            <person name="Wu J."/>
            <person name="Zhou S."/>
            <person name="Childs K.L."/>
            <person name="Davidson R.M."/>
            <person name="Lin H."/>
            <person name="Quesada-Ocampo L."/>
            <person name="Vaillancourt B."/>
            <person name="Sakai H."/>
            <person name="Lee S.S."/>
            <person name="Kim J."/>
            <person name="Numa H."/>
            <person name="Itoh T."/>
            <person name="Buell C.R."/>
            <person name="Matsumoto T."/>
        </authorList>
    </citation>
    <scope>GENOME REANNOTATION</scope>
    <source>
        <strain>cv. Nipponbare</strain>
    </source>
</reference>
<dbReference type="EC" id="1.10.3.2"/>
<dbReference type="EMBL" id="AP004072">
    <property type="protein sequence ID" value="BAD82649.1"/>
    <property type="status" value="ALT_SEQ"/>
    <property type="molecule type" value="Genomic_DNA"/>
</dbReference>
<dbReference type="EMBL" id="AP008207">
    <property type="protein sequence ID" value="BAF06730.2"/>
    <property type="molecule type" value="Genomic_DNA"/>
</dbReference>
<dbReference type="EMBL" id="AP014957">
    <property type="protein sequence ID" value="BAS75245.1"/>
    <property type="molecule type" value="Genomic_DNA"/>
</dbReference>
<dbReference type="SMR" id="Q0JHP8"/>
<dbReference type="STRING" id="39947.Q0JHP8"/>
<dbReference type="GlyCosmos" id="Q0JHP8">
    <property type="glycosylation" value="4 sites, No reported glycans"/>
</dbReference>
<dbReference type="PaxDb" id="39947-Q0JHP8"/>
<dbReference type="EnsemblPlants" id="Os01t0850800-00">
    <property type="protein sequence ID" value="Os01t0850800-00"/>
    <property type="gene ID" value="Os01g0850800"/>
</dbReference>
<dbReference type="GeneID" id="4324803"/>
<dbReference type="Gramene" id="Os01t0850800-00">
    <property type="protein sequence ID" value="Os01t0850800-00"/>
    <property type="gene ID" value="Os01g0850800"/>
</dbReference>
<dbReference type="KEGG" id="dosa:Os01g0850800"/>
<dbReference type="KEGG" id="osa:4324803"/>
<dbReference type="eggNOG" id="KOG1263">
    <property type="taxonomic scope" value="Eukaryota"/>
</dbReference>
<dbReference type="HOGENOM" id="CLU_006504_6_3_1"/>
<dbReference type="InParanoid" id="Q0JHP8"/>
<dbReference type="OMA" id="HILWHQA"/>
<dbReference type="OrthoDB" id="2121828at2759"/>
<dbReference type="Proteomes" id="UP000000763">
    <property type="component" value="Chromosome 1"/>
</dbReference>
<dbReference type="Proteomes" id="UP000059680">
    <property type="component" value="Chromosome 1"/>
</dbReference>
<dbReference type="GO" id="GO:0048046">
    <property type="term" value="C:apoplast"/>
    <property type="evidence" value="ECO:0007669"/>
    <property type="project" value="UniProtKB-SubCell"/>
</dbReference>
<dbReference type="GO" id="GO:0005507">
    <property type="term" value="F:copper ion binding"/>
    <property type="evidence" value="ECO:0007669"/>
    <property type="project" value="InterPro"/>
</dbReference>
<dbReference type="GO" id="GO:0052716">
    <property type="term" value="F:hydroquinone:oxygen oxidoreductase activity"/>
    <property type="evidence" value="ECO:0007669"/>
    <property type="project" value="UniProtKB-EC"/>
</dbReference>
<dbReference type="GO" id="GO:0016491">
    <property type="term" value="F:oxidoreductase activity"/>
    <property type="evidence" value="ECO:0000318"/>
    <property type="project" value="GO_Central"/>
</dbReference>
<dbReference type="GO" id="GO:0046274">
    <property type="term" value="P:lignin catabolic process"/>
    <property type="evidence" value="ECO:0007669"/>
    <property type="project" value="UniProtKB-KW"/>
</dbReference>
<dbReference type="CDD" id="cd13849">
    <property type="entry name" value="CuRO_1_LCC_plant"/>
    <property type="match status" value="1"/>
</dbReference>
<dbReference type="CDD" id="cd13875">
    <property type="entry name" value="CuRO_2_LCC_plant"/>
    <property type="match status" value="1"/>
</dbReference>
<dbReference type="Gene3D" id="2.60.40.420">
    <property type="entry name" value="Cupredoxins - blue copper proteins"/>
    <property type="match status" value="3"/>
</dbReference>
<dbReference type="InterPro" id="IPR011707">
    <property type="entry name" value="Cu-oxidase-like_N"/>
</dbReference>
<dbReference type="InterPro" id="IPR001117">
    <property type="entry name" value="Cu-oxidase_2nd"/>
</dbReference>
<dbReference type="InterPro" id="IPR011706">
    <property type="entry name" value="Cu-oxidase_C"/>
</dbReference>
<dbReference type="InterPro" id="IPR045087">
    <property type="entry name" value="Cu-oxidase_fam"/>
</dbReference>
<dbReference type="InterPro" id="IPR002355">
    <property type="entry name" value="Cu_oxidase_Cu_BS"/>
</dbReference>
<dbReference type="InterPro" id="IPR008972">
    <property type="entry name" value="Cupredoxin"/>
</dbReference>
<dbReference type="InterPro" id="IPR034288">
    <property type="entry name" value="CuRO_1_LCC"/>
</dbReference>
<dbReference type="InterPro" id="IPR034285">
    <property type="entry name" value="CuRO_2_LCC"/>
</dbReference>
<dbReference type="InterPro" id="IPR017761">
    <property type="entry name" value="Laccase"/>
</dbReference>
<dbReference type="NCBIfam" id="TIGR03389">
    <property type="entry name" value="laccase"/>
    <property type="match status" value="1"/>
</dbReference>
<dbReference type="PANTHER" id="PTHR11709:SF506">
    <property type="entry name" value="LACCASE-8"/>
    <property type="match status" value="1"/>
</dbReference>
<dbReference type="PANTHER" id="PTHR11709">
    <property type="entry name" value="MULTI-COPPER OXIDASE"/>
    <property type="match status" value="1"/>
</dbReference>
<dbReference type="Pfam" id="PF00394">
    <property type="entry name" value="Cu-oxidase"/>
    <property type="match status" value="1"/>
</dbReference>
<dbReference type="Pfam" id="PF07731">
    <property type="entry name" value="Cu-oxidase_2"/>
    <property type="match status" value="1"/>
</dbReference>
<dbReference type="Pfam" id="PF07732">
    <property type="entry name" value="Cu-oxidase_3"/>
    <property type="match status" value="1"/>
</dbReference>
<dbReference type="SUPFAM" id="SSF49503">
    <property type="entry name" value="Cupredoxins"/>
    <property type="match status" value="3"/>
</dbReference>
<dbReference type="PROSITE" id="PS00080">
    <property type="entry name" value="MULTICOPPER_OXIDASE2"/>
    <property type="match status" value="1"/>
</dbReference>
<gene>
    <name type="primary">LAC8</name>
    <name type="ordered locus">Os01g0850800</name>
    <name type="ordered locus">LOC_Os01g63200</name>
    <name type="ORF">P0529H11.24</name>
</gene>
<accession>Q0JHP8</accession>
<accession>A0A0P0VAG1</accession>
<accession>Q5N7A2</accession>
<organism>
    <name type="scientific">Oryza sativa subsp. japonica</name>
    <name type="common">Rice</name>
    <dbReference type="NCBI Taxonomy" id="39947"/>
    <lineage>
        <taxon>Eukaryota</taxon>
        <taxon>Viridiplantae</taxon>
        <taxon>Streptophyta</taxon>
        <taxon>Embryophyta</taxon>
        <taxon>Tracheophyta</taxon>
        <taxon>Spermatophyta</taxon>
        <taxon>Magnoliopsida</taxon>
        <taxon>Liliopsida</taxon>
        <taxon>Poales</taxon>
        <taxon>Poaceae</taxon>
        <taxon>BOP clade</taxon>
        <taxon>Oryzoideae</taxon>
        <taxon>Oryzeae</taxon>
        <taxon>Oryzinae</taxon>
        <taxon>Oryza</taxon>
        <taxon>Oryza sativa</taxon>
    </lineage>
</organism>
<comment type="function">
    <text evidence="1">Lignin degradation and detoxification of lignin-derived products.</text>
</comment>
<comment type="catalytic activity">
    <reaction>
        <text>4 hydroquinone + O2 = 4 benzosemiquinone + 2 H2O</text>
        <dbReference type="Rhea" id="RHEA:11276"/>
        <dbReference type="ChEBI" id="CHEBI:15377"/>
        <dbReference type="ChEBI" id="CHEBI:15379"/>
        <dbReference type="ChEBI" id="CHEBI:17594"/>
        <dbReference type="ChEBI" id="CHEBI:17977"/>
        <dbReference type="EC" id="1.10.3.2"/>
    </reaction>
</comment>
<comment type="cofactor">
    <cofactor evidence="1">
        <name>Cu cation</name>
        <dbReference type="ChEBI" id="CHEBI:23378"/>
    </cofactor>
    <text evidence="1">Binds 4 Cu cations per monomer.</text>
</comment>
<comment type="subcellular location">
    <subcellularLocation>
        <location evidence="3">Secreted</location>
        <location evidence="3">Extracellular space</location>
        <location evidence="3">Apoplast</location>
    </subcellularLocation>
</comment>
<comment type="similarity">
    <text evidence="3">Belongs to the multicopper oxidase family.</text>
</comment>
<comment type="sequence caution" evidence="3">
    <conflict type="erroneous gene model prediction">
        <sequence resource="EMBL-CDS" id="BAD82649"/>
    </conflict>
</comment>